<proteinExistence type="inferred from homology"/>
<accession>B3R3X4</accession>
<comment type="function">
    <text evidence="1">NDH-1 shuttles electrons from NADH, via FMN and iron-sulfur (Fe-S) centers, to quinones in the respiratory chain. The immediate electron acceptor for the enzyme in this species is believed to be ubiquinone. Couples the redox reaction to proton translocation (for every two electrons transferred, four hydrogen ions are translocated across the cytoplasmic membrane), and thus conserves the redox energy in a proton gradient. This subunit may bind ubiquinone.</text>
</comment>
<comment type="catalytic activity">
    <reaction evidence="1">
        <text>a quinone + NADH + 5 H(+)(in) = a quinol + NAD(+) + 4 H(+)(out)</text>
        <dbReference type="Rhea" id="RHEA:57888"/>
        <dbReference type="ChEBI" id="CHEBI:15378"/>
        <dbReference type="ChEBI" id="CHEBI:24646"/>
        <dbReference type="ChEBI" id="CHEBI:57540"/>
        <dbReference type="ChEBI" id="CHEBI:57945"/>
        <dbReference type="ChEBI" id="CHEBI:132124"/>
    </reaction>
</comment>
<comment type="subunit">
    <text evidence="1">NDH-1 is composed of 14 different subunits. Subunits NuoA, H, J, K, L, M, N constitute the membrane sector of the complex.</text>
</comment>
<comment type="subcellular location">
    <subcellularLocation>
        <location evidence="1">Cell inner membrane</location>
        <topology evidence="1">Multi-pass membrane protein</topology>
    </subcellularLocation>
</comment>
<comment type="similarity">
    <text evidence="1">Belongs to the complex I subunit 1 family.</text>
</comment>
<evidence type="ECO:0000255" key="1">
    <source>
        <dbReference type="HAMAP-Rule" id="MF_01350"/>
    </source>
</evidence>
<keyword id="KW-0997">Cell inner membrane</keyword>
<keyword id="KW-1003">Cell membrane</keyword>
<keyword id="KW-0472">Membrane</keyword>
<keyword id="KW-0520">NAD</keyword>
<keyword id="KW-0874">Quinone</keyword>
<keyword id="KW-1278">Translocase</keyword>
<keyword id="KW-0812">Transmembrane</keyword>
<keyword id="KW-1133">Transmembrane helix</keyword>
<keyword id="KW-0830">Ubiquinone</keyword>
<dbReference type="EC" id="7.1.1.-" evidence="1"/>
<dbReference type="EMBL" id="CU633749">
    <property type="protein sequence ID" value="CAQ69006.1"/>
    <property type="molecule type" value="Genomic_DNA"/>
</dbReference>
<dbReference type="RefSeq" id="WP_012352336.1">
    <property type="nucleotide sequence ID" value="NC_010528.1"/>
</dbReference>
<dbReference type="SMR" id="B3R3X4"/>
<dbReference type="GeneID" id="29762386"/>
<dbReference type="KEGG" id="cti:RALTA_A1041"/>
<dbReference type="eggNOG" id="COG1005">
    <property type="taxonomic scope" value="Bacteria"/>
</dbReference>
<dbReference type="HOGENOM" id="CLU_015134_0_1_4"/>
<dbReference type="BioCyc" id="CTAI977880:RALTA_RS04950-MONOMER"/>
<dbReference type="Proteomes" id="UP000001692">
    <property type="component" value="Chromosome 1"/>
</dbReference>
<dbReference type="GO" id="GO:0005886">
    <property type="term" value="C:plasma membrane"/>
    <property type="evidence" value="ECO:0007669"/>
    <property type="project" value="UniProtKB-SubCell"/>
</dbReference>
<dbReference type="GO" id="GO:0003954">
    <property type="term" value="F:NADH dehydrogenase activity"/>
    <property type="evidence" value="ECO:0007669"/>
    <property type="project" value="TreeGrafter"/>
</dbReference>
<dbReference type="GO" id="GO:0016655">
    <property type="term" value="F:oxidoreductase activity, acting on NAD(P)H, quinone or similar compound as acceptor"/>
    <property type="evidence" value="ECO:0007669"/>
    <property type="project" value="UniProtKB-UniRule"/>
</dbReference>
<dbReference type="GO" id="GO:0048038">
    <property type="term" value="F:quinone binding"/>
    <property type="evidence" value="ECO:0007669"/>
    <property type="project" value="UniProtKB-KW"/>
</dbReference>
<dbReference type="GO" id="GO:0009060">
    <property type="term" value="P:aerobic respiration"/>
    <property type="evidence" value="ECO:0007669"/>
    <property type="project" value="TreeGrafter"/>
</dbReference>
<dbReference type="HAMAP" id="MF_01350">
    <property type="entry name" value="NDH1_NuoH"/>
    <property type="match status" value="1"/>
</dbReference>
<dbReference type="InterPro" id="IPR001694">
    <property type="entry name" value="NADH_UbQ_OxRdtase_su1/FPO"/>
</dbReference>
<dbReference type="InterPro" id="IPR018086">
    <property type="entry name" value="NADH_UbQ_OxRdtase_su1_CS"/>
</dbReference>
<dbReference type="NCBIfam" id="NF004741">
    <property type="entry name" value="PRK06076.1-2"/>
    <property type="match status" value="1"/>
</dbReference>
<dbReference type="NCBIfam" id="NF004742">
    <property type="entry name" value="PRK06076.1-3"/>
    <property type="match status" value="1"/>
</dbReference>
<dbReference type="PANTHER" id="PTHR11432">
    <property type="entry name" value="NADH DEHYDROGENASE SUBUNIT 1"/>
    <property type="match status" value="1"/>
</dbReference>
<dbReference type="PANTHER" id="PTHR11432:SF3">
    <property type="entry name" value="NADH-UBIQUINONE OXIDOREDUCTASE CHAIN 1"/>
    <property type="match status" value="1"/>
</dbReference>
<dbReference type="Pfam" id="PF00146">
    <property type="entry name" value="NADHdh"/>
    <property type="match status" value="1"/>
</dbReference>
<dbReference type="PROSITE" id="PS00668">
    <property type="entry name" value="COMPLEX1_ND1_2"/>
    <property type="match status" value="1"/>
</dbReference>
<feature type="chain" id="PRO_1000143587" description="NADH-quinone oxidoreductase subunit H">
    <location>
        <begin position="1"/>
        <end position="354"/>
    </location>
</feature>
<feature type="transmembrane region" description="Helical" evidence="1">
    <location>
        <begin position="22"/>
        <end position="42"/>
    </location>
</feature>
<feature type="transmembrane region" description="Helical" evidence="1">
    <location>
        <begin position="91"/>
        <end position="111"/>
    </location>
</feature>
<feature type="transmembrane region" description="Helical" evidence="1">
    <location>
        <begin position="124"/>
        <end position="144"/>
    </location>
</feature>
<feature type="transmembrane region" description="Helical" evidence="1">
    <location>
        <begin position="168"/>
        <end position="188"/>
    </location>
</feature>
<feature type="transmembrane region" description="Helical" evidence="1">
    <location>
        <begin position="203"/>
        <end position="223"/>
    </location>
</feature>
<feature type="transmembrane region" description="Helical" evidence="1">
    <location>
        <begin position="255"/>
        <end position="275"/>
    </location>
</feature>
<feature type="transmembrane region" description="Helical" evidence="1">
    <location>
        <begin position="291"/>
        <end position="311"/>
    </location>
</feature>
<feature type="transmembrane region" description="Helical" evidence="1">
    <location>
        <begin position="326"/>
        <end position="346"/>
    </location>
</feature>
<protein>
    <recommendedName>
        <fullName evidence="1">NADH-quinone oxidoreductase subunit H</fullName>
        <ecNumber evidence="1">7.1.1.-</ecNumber>
    </recommendedName>
    <alternativeName>
        <fullName evidence="1">NADH dehydrogenase I subunit H</fullName>
    </alternativeName>
    <alternativeName>
        <fullName evidence="1">NDH-1 subunit H</fullName>
    </alternativeName>
</protein>
<reference key="1">
    <citation type="journal article" date="2008" name="Genome Res.">
        <title>Genome sequence of the beta-rhizobium Cupriavidus taiwanensis and comparative genomics of rhizobia.</title>
        <authorList>
            <person name="Amadou C."/>
            <person name="Pascal G."/>
            <person name="Mangenot S."/>
            <person name="Glew M."/>
            <person name="Bontemps C."/>
            <person name="Capela D."/>
            <person name="Carrere S."/>
            <person name="Cruveiller S."/>
            <person name="Dossat C."/>
            <person name="Lajus A."/>
            <person name="Marchetti M."/>
            <person name="Poinsot V."/>
            <person name="Rouy Z."/>
            <person name="Servin B."/>
            <person name="Saad M."/>
            <person name="Schenowitz C."/>
            <person name="Barbe V."/>
            <person name="Batut J."/>
            <person name="Medigue C."/>
            <person name="Masson-Boivin C."/>
        </authorList>
    </citation>
    <scope>NUCLEOTIDE SEQUENCE [LARGE SCALE GENOMIC DNA]</scope>
    <source>
        <strain>DSM 17343 / BCRC 17206 / CCUG 44338 / CIP 107171 / LMG 19424 / R1</strain>
    </source>
</reference>
<sequence length="354" mass="39543">MIDWITSQGQGVLGAYWTPLWILIRAVIIVVPLLLCVAYLILWERKLIGWMHVRIGPNRVGPLGLLQPIADVLKLLLKEVMMPTQVSRGMYLIAPLMVLMPAVAIWAVIPFQAEVVMADVNAGLLYVMAISSVGVYGVILAGWASNSKYAFIGAMRAAAQMVSYEIAMGFALVTVLMVAGSLNLSAIVNGQNTGYFADMGINILSWNWLPLLPMFGVYFISGVAETNRHPFDVVEGESEIVAGHMIEYSGMGFALFFLAEYINMIIISTMTALMFLGGWAPPFESVVTNAIPGFFWLLIKVFLLLSVFIWIRASFPRYRYDQIMRLGWKVFIPLTVAWLIIVAIWIKSPWNIWH</sequence>
<organism>
    <name type="scientific">Cupriavidus taiwanensis (strain DSM 17343 / BCRC 17206 / CCUG 44338 / CIP 107171 / LMG 19424 / R1)</name>
    <name type="common">Ralstonia taiwanensis (strain LMG 19424)</name>
    <dbReference type="NCBI Taxonomy" id="977880"/>
    <lineage>
        <taxon>Bacteria</taxon>
        <taxon>Pseudomonadati</taxon>
        <taxon>Pseudomonadota</taxon>
        <taxon>Betaproteobacteria</taxon>
        <taxon>Burkholderiales</taxon>
        <taxon>Burkholderiaceae</taxon>
        <taxon>Cupriavidus</taxon>
    </lineage>
</organism>
<name>NUOH_CUPTR</name>
<gene>
    <name evidence="1" type="primary">nuoH</name>
    <name type="ordered locus">RALTA_A1041</name>
</gene>